<comment type="function">
    <text evidence="1">Component of the A-type ATP synthase that produces ATP from ADP in the presence of a proton gradient across the membrane. The A chain is the catalytic subunit.</text>
</comment>
<comment type="catalytic activity">
    <reaction evidence="1">
        <text>ATP + H2O + 4 H(+)(in) = ADP + phosphate + 5 H(+)(out)</text>
        <dbReference type="Rhea" id="RHEA:57720"/>
        <dbReference type="ChEBI" id="CHEBI:15377"/>
        <dbReference type="ChEBI" id="CHEBI:15378"/>
        <dbReference type="ChEBI" id="CHEBI:30616"/>
        <dbReference type="ChEBI" id="CHEBI:43474"/>
        <dbReference type="ChEBI" id="CHEBI:456216"/>
        <dbReference type="EC" id="7.1.2.2"/>
    </reaction>
</comment>
<comment type="subunit">
    <text evidence="1">Has multiple subunits with at least A(3), B(3), C, D, E, F, H, I and proteolipid K(x).</text>
</comment>
<comment type="subcellular location">
    <subcellularLocation>
        <location evidence="1">Cell membrane</location>
        <topology evidence="1">Peripheral membrane protein</topology>
    </subcellularLocation>
</comment>
<comment type="similarity">
    <text evidence="1">Belongs to the ATPase alpha/beta chains family.</text>
</comment>
<proteinExistence type="inferred from homology"/>
<keyword id="KW-0066">ATP synthesis</keyword>
<keyword id="KW-0067">ATP-binding</keyword>
<keyword id="KW-1003">Cell membrane</keyword>
<keyword id="KW-0375">Hydrogen ion transport</keyword>
<keyword id="KW-0406">Ion transport</keyword>
<keyword id="KW-0472">Membrane</keyword>
<keyword id="KW-0547">Nucleotide-binding</keyword>
<keyword id="KW-1185">Reference proteome</keyword>
<keyword id="KW-1278">Translocase</keyword>
<keyword id="KW-0813">Transport</keyword>
<feature type="chain" id="PRO_1000059348" description="A-type ATP synthase subunit A">
    <location>
        <begin position="1"/>
        <end position="585"/>
    </location>
</feature>
<feature type="binding site" evidence="1">
    <location>
        <begin position="237"/>
        <end position="244"/>
    </location>
    <ligand>
        <name>ATP</name>
        <dbReference type="ChEBI" id="CHEBI:30616"/>
    </ligand>
</feature>
<reference key="1">
    <citation type="journal article" date="2005" name="Genome Res.">
        <title>Living with two extremes: conclusions from the genome sequence of Natronomonas pharaonis.</title>
        <authorList>
            <person name="Falb M."/>
            <person name="Pfeiffer F."/>
            <person name="Palm P."/>
            <person name="Rodewald K."/>
            <person name="Hickmann V."/>
            <person name="Tittor J."/>
            <person name="Oesterhelt D."/>
        </authorList>
    </citation>
    <scope>NUCLEOTIDE SEQUENCE [LARGE SCALE GENOMIC DNA]</scope>
    <source>
        <strain>ATCC 35678 / DSM 2160 / CIP 103997 / JCM 8858 / NBRC 14720 / NCIMB 2260 / Gabara</strain>
    </source>
</reference>
<name>AATA_NATPD</name>
<sequence length="585" mass="65070">MSQATASEITDEGVIESVSGPVVTAVDLDARMNDVVYVGEEGLMGEVIEIEGNLTTIQVYEETSDVAPGEPVENTGEPLSVDLGPGMMDSIYDGVQRPLDVLEEKMGAFLDRGVDAPGIDLEKTWEFNPEVSEGDEVSPGDVVGIVPETESIDHKVLVPPDYEGGEVTAVESGNFTVDETVVELDSGEEIQMRQEWPVREPRPTVEKETPTTPLVSGQRVLDGLFPIAKGGTAAIPGPFGSGKTVTQHQLAKWADADIVVYVGCGERGNEMTEVIEDFPELEDPKTGKPLMSRTCLIANTSNMPVAARESCVYTGITIAEYYRDMGYDVALMADSTSRWAEAMREISSRLEEMPGEEGYPAYLAARLSEFYERAGKFQNMNGSEGSISVIGAVSPPGGDFSEPVTQNTLRIVKCFWALDADLAERRHFPSINWNESYSLYKEQLDPWWRENVHEEFPEVRQWAVDVLDEEDELQEIVQLVGKDALPEDQQLTLEVARYIREAWLQQNAFHDVDTYCEPEKTYQMLTAIQHFNDEAFEALDAGVPVEEIIDVDAVPQLNRMNTQEDYEEYIEELKGDLTDQLRELY</sequence>
<evidence type="ECO:0000255" key="1">
    <source>
        <dbReference type="HAMAP-Rule" id="MF_00309"/>
    </source>
</evidence>
<protein>
    <recommendedName>
        <fullName evidence="1">A-type ATP synthase subunit A</fullName>
        <ecNumber evidence="1">7.1.2.2</ecNumber>
    </recommendedName>
</protein>
<accession>Q3ITC8</accession>
<gene>
    <name evidence="1" type="primary">atpA</name>
    <name type="ordered locus">NP_1030A</name>
</gene>
<dbReference type="EC" id="7.1.2.2" evidence="1"/>
<dbReference type="EMBL" id="CR936257">
    <property type="protein sequence ID" value="CAI48606.1"/>
    <property type="molecule type" value="Genomic_DNA"/>
</dbReference>
<dbReference type="RefSeq" id="WP_011322241.1">
    <property type="nucleotide sequence ID" value="NC_007426.1"/>
</dbReference>
<dbReference type="SMR" id="Q3ITC8"/>
<dbReference type="STRING" id="348780.NP_1030A"/>
<dbReference type="EnsemblBacteria" id="CAI48606">
    <property type="protein sequence ID" value="CAI48606"/>
    <property type="gene ID" value="NP_1030A"/>
</dbReference>
<dbReference type="GeneID" id="3702538"/>
<dbReference type="KEGG" id="nph:NP_1030A"/>
<dbReference type="eggNOG" id="arCOG00868">
    <property type="taxonomic scope" value="Archaea"/>
</dbReference>
<dbReference type="HOGENOM" id="CLU_008162_3_1_2"/>
<dbReference type="OrthoDB" id="115235at2157"/>
<dbReference type="Proteomes" id="UP000002698">
    <property type="component" value="Chromosome"/>
</dbReference>
<dbReference type="GO" id="GO:0005886">
    <property type="term" value="C:plasma membrane"/>
    <property type="evidence" value="ECO:0007669"/>
    <property type="project" value="UniProtKB-SubCell"/>
</dbReference>
<dbReference type="GO" id="GO:0033178">
    <property type="term" value="C:proton-transporting two-sector ATPase complex, catalytic domain"/>
    <property type="evidence" value="ECO:0007669"/>
    <property type="project" value="InterPro"/>
</dbReference>
<dbReference type="GO" id="GO:0005524">
    <property type="term" value="F:ATP binding"/>
    <property type="evidence" value="ECO:0007669"/>
    <property type="project" value="UniProtKB-UniRule"/>
</dbReference>
<dbReference type="GO" id="GO:0046933">
    <property type="term" value="F:proton-transporting ATP synthase activity, rotational mechanism"/>
    <property type="evidence" value="ECO:0007669"/>
    <property type="project" value="UniProtKB-UniRule"/>
</dbReference>
<dbReference type="GO" id="GO:0046961">
    <property type="term" value="F:proton-transporting ATPase activity, rotational mechanism"/>
    <property type="evidence" value="ECO:0007669"/>
    <property type="project" value="InterPro"/>
</dbReference>
<dbReference type="GO" id="GO:0042777">
    <property type="term" value="P:proton motive force-driven plasma membrane ATP synthesis"/>
    <property type="evidence" value="ECO:0007669"/>
    <property type="project" value="UniProtKB-UniRule"/>
</dbReference>
<dbReference type="CDD" id="cd18111">
    <property type="entry name" value="ATP-synt_V_A-type_alpha_C"/>
    <property type="match status" value="1"/>
</dbReference>
<dbReference type="CDD" id="cd01134">
    <property type="entry name" value="V_A-ATPase_A"/>
    <property type="match status" value="1"/>
</dbReference>
<dbReference type="FunFam" id="3.40.50.300:FF:000675">
    <property type="entry name" value="V-type ATP synthase alpha chain"/>
    <property type="match status" value="1"/>
</dbReference>
<dbReference type="FunFam" id="1.10.1140.10:FF:000002">
    <property type="entry name" value="V-type proton ATPase catalytic subunit A"/>
    <property type="match status" value="1"/>
</dbReference>
<dbReference type="FunFam" id="2.40.50.100:FF:000008">
    <property type="entry name" value="V-type proton ATPase catalytic subunit A"/>
    <property type="match status" value="1"/>
</dbReference>
<dbReference type="Gene3D" id="2.40.30.20">
    <property type="match status" value="1"/>
</dbReference>
<dbReference type="Gene3D" id="2.40.50.100">
    <property type="match status" value="1"/>
</dbReference>
<dbReference type="Gene3D" id="1.10.1140.10">
    <property type="entry name" value="Bovine Mitochondrial F1-atpase, Atp Synthase Beta Chain, Chain D, domain 3"/>
    <property type="match status" value="1"/>
</dbReference>
<dbReference type="Gene3D" id="3.40.50.300">
    <property type="entry name" value="P-loop containing nucleotide triphosphate hydrolases"/>
    <property type="match status" value="1"/>
</dbReference>
<dbReference type="HAMAP" id="MF_00309">
    <property type="entry name" value="ATP_synth_A_arch"/>
    <property type="match status" value="1"/>
</dbReference>
<dbReference type="InterPro" id="IPR055190">
    <property type="entry name" value="ATP-synt_VA_C"/>
</dbReference>
<dbReference type="InterPro" id="IPR031686">
    <property type="entry name" value="ATP-synth_a_Xtn"/>
</dbReference>
<dbReference type="InterPro" id="IPR023366">
    <property type="entry name" value="ATP_synth_asu-like_sf"/>
</dbReference>
<dbReference type="InterPro" id="IPR005726">
    <property type="entry name" value="ATP_synth_asu_arc"/>
</dbReference>
<dbReference type="InterPro" id="IPR020003">
    <property type="entry name" value="ATPase_a/bsu_AS"/>
</dbReference>
<dbReference type="InterPro" id="IPR004100">
    <property type="entry name" value="ATPase_F1/V1/A1_a/bsu_N"/>
</dbReference>
<dbReference type="InterPro" id="IPR036121">
    <property type="entry name" value="ATPase_F1/V1/A1_a/bsu_N_sf"/>
</dbReference>
<dbReference type="InterPro" id="IPR000194">
    <property type="entry name" value="ATPase_F1/V1/A1_a/bsu_nucl-bd"/>
</dbReference>
<dbReference type="InterPro" id="IPR024034">
    <property type="entry name" value="ATPase_F1/V1_b/a_C"/>
</dbReference>
<dbReference type="InterPro" id="IPR027417">
    <property type="entry name" value="P-loop_NTPase"/>
</dbReference>
<dbReference type="InterPro" id="IPR022878">
    <property type="entry name" value="V-ATPase_asu"/>
</dbReference>
<dbReference type="NCBIfam" id="TIGR01043">
    <property type="entry name" value="ATP_syn_A_arch"/>
    <property type="match status" value="1"/>
</dbReference>
<dbReference type="NCBIfam" id="NF003220">
    <property type="entry name" value="PRK04192.1"/>
    <property type="match status" value="1"/>
</dbReference>
<dbReference type="PANTHER" id="PTHR43607:SF1">
    <property type="entry name" value="H(+)-TRANSPORTING TWO-SECTOR ATPASE"/>
    <property type="match status" value="1"/>
</dbReference>
<dbReference type="PANTHER" id="PTHR43607">
    <property type="entry name" value="V-TYPE PROTON ATPASE CATALYTIC SUBUNIT A"/>
    <property type="match status" value="1"/>
</dbReference>
<dbReference type="Pfam" id="PF00006">
    <property type="entry name" value="ATP-synt_ab"/>
    <property type="match status" value="1"/>
</dbReference>
<dbReference type="Pfam" id="PF02874">
    <property type="entry name" value="ATP-synt_ab_N"/>
    <property type="match status" value="1"/>
</dbReference>
<dbReference type="Pfam" id="PF16886">
    <property type="entry name" value="ATP-synt_ab_Xtn"/>
    <property type="match status" value="1"/>
</dbReference>
<dbReference type="Pfam" id="PF22919">
    <property type="entry name" value="ATP-synt_VA_C"/>
    <property type="match status" value="1"/>
</dbReference>
<dbReference type="SUPFAM" id="SSF47917">
    <property type="entry name" value="C-terminal domain of alpha and beta subunits of F1 ATP synthase"/>
    <property type="match status" value="1"/>
</dbReference>
<dbReference type="SUPFAM" id="SSF50615">
    <property type="entry name" value="N-terminal domain of alpha and beta subunits of F1 ATP synthase"/>
    <property type="match status" value="1"/>
</dbReference>
<dbReference type="SUPFAM" id="SSF52540">
    <property type="entry name" value="P-loop containing nucleoside triphosphate hydrolases"/>
    <property type="match status" value="1"/>
</dbReference>
<dbReference type="PROSITE" id="PS00152">
    <property type="entry name" value="ATPASE_ALPHA_BETA"/>
    <property type="match status" value="1"/>
</dbReference>
<organism>
    <name type="scientific">Natronomonas pharaonis (strain ATCC 35678 / DSM 2160 / CIP 103997 / JCM 8858 / NBRC 14720 / NCIMB 2260 / Gabara)</name>
    <name type="common">Halobacterium pharaonis</name>
    <dbReference type="NCBI Taxonomy" id="348780"/>
    <lineage>
        <taxon>Archaea</taxon>
        <taxon>Methanobacteriati</taxon>
        <taxon>Methanobacteriota</taxon>
        <taxon>Stenosarchaea group</taxon>
        <taxon>Halobacteria</taxon>
        <taxon>Halobacteriales</taxon>
        <taxon>Haloarculaceae</taxon>
        <taxon>Natronomonas</taxon>
    </lineage>
</organism>